<feature type="chain" id="PRO_0000174127" description="Glutamate carboxypeptidase 2 homolog" evidence="3">
    <location>
        <begin position="1"/>
        <end position="770"/>
    </location>
</feature>
<feature type="topological domain" description="Cytoplasmic" evidence="2">
    <location>
        <begin position="1"/>
        <end position="19"/>
    </location>
</feature>
<feature type="transmembrane region" description="Helical; Signal-anchor for type II membrane protein" evidence="2">
    <location>
        <begin position="20"/>
        <end position="40"/>
    </location>
</feature>
<feature type="topological domain" description="Extracellular" evidence="2">
    <location>
        <begin position="41"/>
        <end position="770"/>
    </location>
</feature>
<feature type="region of interest" description="Catalytic" evidence="1">
    <location>
        <begin position="282"/>
        <end position="597"/>
    </location>
</feature>
<feature type="active site" description="Nucleophile" evidence="1">
    <location>
        <position position="435"/>
    </location>
</feature>
<feature type="binding site" evidence="1">
    <location>
        <position position="387"/>
    </location>
    <ligand>
        <name>Zn(2+)</name>
        <dbReference type="ChEBI" id="CHEBI:29105"/>
        <label>1</label>
    </ligand>
</feature>
<feature type="binding site" evidence="1">
    <location>
        <position position="397"/>
    </location>
    <ligand>
        <name>Zn(2+)</name>
        <dbReference type="ChEBI" id="CHEBI:29105"/>
        <label>1</label>
    </ligand>
</feature>
<feature type="binding site" evidence="1">
    <location>
        <position position="397"/>
    </location>
    <ligand>
        <name>Zn(2+)</name>
        <dbReference type="ChEBI" id="CHEBI:29105"/>
        <label>2</label>
    </ligand>
</feature>
<feature type="binding site" evidence="1">
    <location>
        <position position="436"/>
    </location>
    <ligand>
        <name>Zn(2+)</name>
        <dbReference type="ChEBI" id="CHEBI:29105"/>
        <label>2</label>
    </ligand>
</feature>
<feature type="binding site" evidence="1">
    <location>
        <position position="464"/>
    </location>
    <ligand>
        <name>Zn(2+)</name>
        <dbReference type="ChEBI" id="CHEBI:29105"/>
        <label>1</label>
    </ligand>
</feature>
<feature type="binding site" evidence="1">
    <location>
        <position position="562"/>
    </location>
    <ligand>
        <name>Zn(2+)</name>
        <dbReference type="ChEBI" id="CHEBI:29105"/>
        <label>2</label>
    </ligand>
</feature>
<feature type="glycosylation site" description="N-linked (GlcNAc...) asparagine" evidence="2">
    <location>
        <position position="175"/>
    </location>
</feature>
<feature type="glycosylation site" description="N-linked (GlcNAc...) asparagine" evidence="2">
    <location>
        <position position="337"/>
    </location>
</feature>
<feature type="glycosylation site" description="N-linked (GlcNAc...) asparagine" evidence="2">
    <location>
        <position position="417"/>
    </location>
</feature>
<feature type="glycosylation site" description="N-linked (GlcNAc...) asparagine" evidence="2">
    <location>
        <position position="469"/>
    </location>
</feature>
<feature type="glycosylation site" description="N-linked (GlcNAc...) asparagine" evidence="2">
    <location>
        <position position="551"/>
    </location>
</feature>
<feature type="glycosylation site" description="N-linked (GlcNAc...) asparagine" evidence="2">
    <location>
        <position position="606"/>
    </location>
</feature>
<feature type="glycosylation site" description="N-linked (GlcNAc...) asparagine" evidence="2">
    <location>
        <position position="630"/>
    </location>
</feature>
<dbReference type="EC" id="3.4.17.21" evidence="1"/>
<dbReference type="EMBL" id="HE600971">
    <property type="protein sequence ID" value="CAP28063.3"/>
    <property type="molecule type" value="Genomic_DNA"/>
</dbReference>
<dbReference type="RefSeq" id="XP_002643302.1">
    <property type="nucleotide sequence ID" value="XM_002643256.1"/>
</dbReference>
<dbReference type="SMR" id="Q5WN23"/>
<dbReference type="FunCoup" id="Q5WN23">
    <property type="interactions" value="273"/>
</dbReference>
<dbReference type="STRING" id="6238.Q5WN23"/>
<dbReference type="MEROPS" id="M28.A19"/>
<dbReference type="GlyCosmos" id="Q5WN23">
    <property type="glycosylation" value="7 sites, No reported glycans"/>
</dbReference>
<dbReference type="EnsemblMetazoa" id="CBG08178.1">
    <property type="protein sequence ID" value="CBG08178.1"/>
    <property type="gene ID" value="WBGene00030030"/>
</dbReference>
<dbReference type="GeneID" id="8585296"/>
<dbReference type="KEGG" id="cbr:CBG_08178"/>
<dbReference type="CTD" id="8585296"/>
<dbReference type="WormBase" id="CBG08178">
    <property type="protein sequence ID" value="CBP01974"/>
    <property type="gene ID" value="WBGene00030030"/>
    <property type="gene designation" value="Cbr-gcp-2.1"/>
</dbReference>
<dbReference type="eggNOG" id="KOG2195">
    <property type="taxonomic scope" value="Eukaryota"/>
</dbReference>
<dbReference type="HOGENOM" id="CLU_005688_3_2_1"/>
<dbReference type="InParanoid" id="Q5WN23"/>
<dbReference type="OMA" id="NVVIASW"/>
<dbReference type="Proteomes" id="UP000008549">
    <property type="component" value="Unassembled WGS sequence"/>
</dbReference>
<dbReference type="GO" id="GO:0016020">
    <property type="term" value="C:membrane"/>
    <property type="evidence" value="ECO:0007669"/>
    <property type="project" value="UniProtKB-SubCell"/>
</dbReference>
<dbReference type="GO" id="GO:0004180">
    <property type="term" value="F:carboxypeptidase activity"/>
    <property type="evidence" value="ECO:0000318"/>
    <property type="project" value="GO_Central"/>
</dbReference>
<dbReference type="GO" id="GO:0046872">
    <property type="term" value="F:metal ion binding"/>
    <property type="evidence" value="ECO:0007669"/>
    <property type="project" value="UniProtKB-KW"/>
</dbReference>
<dbReference type="GO" id="GO:0004181">
    <property type="term" value="F:metallocarboxypeptidase activity"/>
    <property type="evidence" value="ECO:0000250"/>
    <property type="project" value="UniProtKB"/>
</dbReference>
<dbReference type="GO" id="GO:0006508">
    <property type="term" value="P:proteolysis"/>
    <property type="evidence" value="ECO:0000250"/>
    <property type="project" value="UniProtKB"/>
</dbReference>
<dbReference type="CDD" id="cd08022">
    <property type="entry name" value="M28_PSMA_like"/>
    <property type="match status" value="1"/>
</dbReference>
<dbReference type="CDD" id="cd02121">
    <property type="entry name" value="PA_GCPII_like"/>
    <property type="match status" value="1"/>
</dbReference>
<dbReference type="FunFam" id="1.20.930.40:FF:000009">
    <property type="entry name" value="Glutamate carboxypeptidase 2 homolog"/>
    <property type="match status" value="1"/>
</dbReference>
<dbReference type="FunFam" id="3.50.30.30:FF:000033">
    <property type="entry name" value="Glutamate carboxypeptidase 2 homolog"/>
    <property type="match status" value="1"/>
</dbReference>
<dbReference type="FunFam" id="3.40.630.10:FF:000009">
    <property type="entry name" value="N-acetylated-alpha-linked acidic dipeptidase 2"/>
    <property type="match status" value="1"/>
</dbReference>
<dbReference type="Gene3D" id="3.50.30.30">
    <property type="match status" value="1"/>
</dbReference>
<dbReference type="Gene3D" id="1.20.930.40">
    <property type="entry name" value="Transferrin receptor-like, dimerisation domain"/>
    <property type="match status" value="1"/>
</dbReference>
<dbReference type="Gene3D" id="3.40.630.10">
    <property type="entry name" value="Zn peptidases"/>
    <property type="match status" value="1"/>
</dbReference>
<dbReference type="InterPro" id="IPR046450">
    <property type="entry name" value="PA_dom_sf"/>
</dbReference>
<dbReference type="InterPro" id="IPR003137">
    <property type="entry name" value="PA_domain"/>
</dbReference>
<dbReference type="InterPro" id="IPR007484">
    <property type="entry name" value="Peptidase_M28"/>
</dbReference>
<dbReference type="InterPro" id="IPR039373">
    <property type="entry name" value="Peptidase_M28B"/>
</dbReference>
<dbReference type="InterPro" id="IPR007365">
    <property type="entry name" value="TFR-like_dimer_dom"/>
</dbReference>
<dbReference type="InterPro" id="IPR036757">
    <property type="entry name" value="TFR-like_dimer_dom_sf"/>
</dbReference>
<dbReference type="PANTHER" id="PTHR10404:SF77">
    <property type="entry name" value="GLUTAMATE CARBOXYPEPTIDASE 2 HOMOLOG"/>
    <property type="match status" value="1"/>
</dbReference>
<dbReference type="PANTHER" id="PTHR10404">
    <property type="entry name" value="N-ACETYLATED-ALPHA-LINKED ACIDIC DIPEPTIDASE"/>
    <property type="match status" value="1"/>
</dbReference>
<dbReference type="Pfam" id="PF02225">
    <property type="entry name" value="PA"/>
    <property type="match status" value="1"/>
</dbReference>
<dbReference type="Pfam" id="PF04389">
    <property type="entry name" value="Peptidase_M28"/>
    <property type="match status" value="1"/>
</dbReference>
<dbReference type="Pfam" id="PF04253">
    <property type="entry name" value="TFR_dimer"/>
    <property type="match status" value="1"/>
</dbReference>
<dbReference type="SUPFAM" id="SSF52025">
    <property type="entry name" value="PA domain"/>
    <property type="match status" value="1"/>
</dbReference>
<dbReference type="SUPFAM" id="SSF47672">
    <property type="entry name" value="Transferrin receptor-like dimerisation domain"/>
    <property type="match status" value="1"/>
</dbReference>
<dbReference type="SUPFAM" id="SSF53187">
    <property type="entry name" value="Zn-dependent exopeptidases"/>
    <property type="match status" value="1"/>
</dbReference>
<protein>
    <recommendedName>
        <fullName evidence="1">Glutamate carboxypeptidase 2 homolog</fullName>
        <ecNumber evidence="1">3.4.17.21</ecNumber>
    </recommendedName>
    <alternativeName>
        <fullName evidence="1">Glutamate carboxypeptidase II homolog</fullName>
    </alternativeName>
</protein>
<keyword id="KW-0121">Carboxypeptidase</keyword>
<keyword id="KW-0325">Glycoprotein</keyword>
<keyword id="KW-0378">Hydrolase</keyword>
<keyword id="KW-0472">Membrane</keyword>
<keyword id="KW-0479">Metal-binding</keyword>
<keyword id="KW-0482">Metalloprotease</keyword>
<keyword id="KW-0645">Protease</keyword>
<keyword id="KW-1185">Reference proteome</keyword>
<keyword id="KW-0735">Signal-anchor</keyword>
<keyword id="KW-0812">Transmembrane</keyword>
<keyword id="KW-1133">Transmembrane helix</keyword>
<keyword id="KW-0862">Zinc</keyword>
<evidence type="ECO:0000250" key="1">
    <source>
        <dbReference type="UniProtKB" id="Q04609"/>
    </source>
</evidence>
<evidence type="ECO:0000255" key="2"/>
<evidence type="ECO:0000305" key="3"/>
<evidence type="ECO:0000312" key="4">
    <source>
        <dbReference type="WormBase" id="CBG08178"/>
    </source>
</evidence>
<accession>Q5WN23</accession>
<accession>A8X602</accession>
<sequence>MPYVGVGAQKASTNLTGGPMMKAYAFVLAFFLLGLGVLALGKHHSGRRFNQYSKVSIDDIHETDAKTIQDNIKSENIKKYLRIFTQEPHIAGTDANKKVAYAIASAWTEAGLEDVHTLPYEVLLSYPDFENPNSVVIQNSAGKEIFRSKGVSPVIIPDEQSGKYAGHQWLAYGGNGTVSADVVYINRGNANDFKNLKLMGVDVKGKIALMRYGHGFRGDKVYKAQQAGAIGAILFSDTSDVAQDGVDSEHVYPKTIWMPNEGVQRGSLMHGDGDPLSPFYPSKKELFKGRTIEEAKDDGTLPSIPVLPVSYTTALQLLKRMSGRAVPSDWQGFVGGNLTYKLGPGFVNGEKLTINVHSELKTKRIRNVIGYIRGAEEPDRYIMLGNHFDAWVYGSIDPNSGTAVLAEVARAMMQTINETSWRPARTIVFNAWDAEEFGLIGSTEFVEEFVDVLQKRAVVYINMDCIQGNASLHVDTVPTLEHIAIEAAKHVPNPSKRERSRGRNTVYDTWMKVFPEKKAGRPKIRVPGGGSDHAPFLNFAGVPVINFNYKNYTTFDTYPLYHSMYETPFTNIHLMDTEDLAVHRAIGQYWAELAKTFADEVVLPMNTTNLASVMIKSYLPQLKASISGINVSRIDFESIRTQYALLSKSSQDLLVMSKKFQETMQFTFHSFSQNPYDAKHVNAVNERLISTERCFINPRGVSKHNPSARHVLFSVSDSDSYSNSLMAGIQNAIHSYETSPSKKNLREIINQISTVQYSVICVVNTLRDVI</sequence>
<gene>
    <name evidence="4" type="primary">gcp-2.1</name>
    <name evidence="4" type="ORF">CBG08178</name>
</gene>
<organism>
    <name type="scientific">Caenorhabditis briggsae</name>
    <dbReference type="NCBI Taxonomy" id="6238"/>
    <lineage>
        <taxon>Eukaryota</taxon>
        <taxon>Metazoa</taxon>
        <taxon>Ecdysozoa</taxon>
        <taxon>Nematoda</taxon>
        <taxon>Chromadorea</taxon>
        <taxon>Rhabditida</taxon>
        <taxon>Rhabditina</taxon>
        <taxon>Rhabditomorpha</taxon>
        <taxon>Rhabditoidea</taxon>
        <taxon>Rhabditidae</taxon>
        <taxon>Peloderinae</taxon>
        <taxon>Caenorhabditis</taxon>
    </lineage>
</organism>
<name>GCP2_CAEBR</name>
<proteinExistence type="inferred from homology"/>
<comment type="catalytic activity">
    <reaction evidence="1">
        <text>Release of an unsubstituted, C-terminal glutamyl residue, typically from Ac-Asp-Glu or folylpoly-gamma-glutamates.</text>
        <dbReference type="EC" id="3.4.17.21"/>
    </reaction>
</comment>
<comment type="cofactor">
    <cofactor evidence="1">
        <name>Zn(2+)</name>
        <dbReference type="ChEBI" id="CHEBI:29105"/>
    </cofactor>
    <text evidence="1">Binds 2 Zn(2+) ions per subunit.</text>
</comment>
<comment type="subcellular location">
    <subcellularLocation>
        <location>Membrane</location>
        <topology>Single-pass type II membrane protein</topology>
    </subcellularLocation>
</comment>
<comment type="similarity">
    <text evidence="3">Belongs to the peptidase M28 family. M28B subfamily.</text>
</comment>
<reference key="1">
    <citation type="journal article" date="2003" name="PLoS Biol.">
        <title>The genome sequence of Caenorhabditis briggsae: a platform for comparative genomics.</title>
        <authorList>
            <person name="Stein L.D."/>
            <person name="Bao Z."/>
            <person name="Blasiar D."/>
            <person name="Blumenthal T."/>
            <person name="Brent M.R."/>
            <person name="Chen N."/>
            <person name="Chinwalla A."/>
            <person name="Clarke L."/>
            <person name="Clee C."/>
            <person name="Coghlan A."/>
            <person name="Coulson A."/>
            <person name="D'Eustachio P."/>
            <person name="Fitch D.H.A."/>
            <person name="Fulton L.A."/>
            <person name="Fulton R.E."/>
            <person name="Griffiths-Jones S."/>
            <person name="Harris T.W."/>
            <person name="Hillier L.W."/>
            <person name="Kamath R."/>
            <person name="Kuwabara P.E."/>
            <person name="Mardis E.R."/>
            <person name="Marra M.A."/>
            <person name="Miner T.L."/>
            <person name="Minx P."/>
            <person name="Mullikin J.C."/>
            <person name="Plumb R.W."/>
            <person name="Rogers J."/>
            <person name="Schein J.E."/>
            <person name="Sohrmann M."/>
            <person name="Spieth J."/>
            <person name="Stajich J.E."/>
            <person name="Wei C."/>
            <person name="Willey D."/>
            <person name="Wilson R.K."/>
            <person name="Durbin R.M."/>
            <person name="Waterston R.H."/>
        </authorList>
    </citation>
    <scope>NUCLEOTIDE SEQUENCE [LARGE SCALE GENOMIC DNA]</scope>
    <source>
        <strain>AF16</strain>
    </source>
</reference>